<reference key="1">
    <citation type="journal article" date="2005" name="Science">
        <title>The transcriptional landscape of the mammalian genome.</title>
        <authorList>
            <person name="Carninci P."/>
            <person name="Kasukawa T."/>
            <person name="Katayama S."/>
            <person name="Gough J."/>
            <person name="Frith M.C."/>
            <person name="Maeda N."/>
            <person name="Oyama R."/>
            <person name="Ravasi T."/>
            <person name="Lenhard B."/>
            <person name="Wells C."/>
            <person name="Kodzius R."/>
            <person name="Shimokawa K."/>
            <person name="Bajic V.B."/>
            <person name="Brenner S.E."/>
            <person name="Batalov S."/>
            <person name="Forrest A.R."/>
            <person name="Zavolan M."/>
            <person name="Davis M.J."/>
            <person name="Wilming L.G."/>
            <person name="Aidinis V."/>
            <person name="Allen J.E."/>
            <person name="Ambesi-Impiombato A."/>
            <person name="Apweiler R."/>
            <person name="Aturaliya R.N."/>
            <person name="Bailey T.L."/>
            <person name="Bansal M."/>
            <person name="Baxter L."/>
            <person name="Beisel K.W."/>
            <person name="Bersano T."/>
            <person name="Bono H."/>
            <person name="Chalk A.M."/>
            <person name="Chiu K.P."/>
            <person name="Choudhary V."/>
            <person name="Christoffels A."/>
            <person name="Clutterbuck D.R."/>
            <person name="Crowe M.L."/>
            <person name="Dalla E."/>
            <person name="Dalrymple B.P."/>
            <person name="de Bono B."/>
            <person name="Della Gatta G."/>
            <person name="di Bernardo D."/>
            <person name="Down T."/>
            <person name="Engstrom P."/>
            <person name="Fagiolini M."/>
            <person name="Faulkner G."/>
            <person name="Fletcher C.F."/>
            <person name="Fukushima T."/>
            <person name="Furuno M."/>
            <person name="Futaki S."/>
            <person name="Gariboldi M."/>
            <person name="Georgii-Hemming P."/>
            <person name="Gingeras T.R."/>
            <person name="Gojobori T."/>
            <person name="Green R.E."/>
            <person name="Gustincich S."/>
            <person name="Harbers M."/>
            <person name="Hayashi Y."/>
            <person name="Hensch T.K."/>
            <person name="Hirokawa N."/>
            <person name="Hill D."/>
            <person name="Huminiecki L."/>
            <person name="Iacono M."/>
            <person name="Ikeo K."/>
            <person name="Iwama A."/>
            <person name="Ishikawa T."/>
            <person name="Jakt M."/>
            <person name="Kanapin A."/>
            <person name="Katoh M."/>
            <person name="Kawasawa Y."/>
            <person name="Kelso J."/>
            <person name="Kitamura H."/>
            <person name="Kitano H."/>
            <person name="Kollias G."/>
            <person name="Krishnan S.P."/>
            <person name="Kruger A."/>
            <person name="Kummerfeld S.K."/>
            <person name="Kurochkin I.V."/>
            <person name="Lareau L.F."/>
            <person name="Lazarevic D."/>
            <person name="Lipovich L."/>
            <person name="Liu J."/>
            <person name="Liuni S."/>
            <person name="McWilliam S."/>
            <person name="Madan Babu M."/>
            <person name="Madera M."/>
            <person name="Marchionni L."/>
            <person name="Matsuda H."/>
            <person name="Matsuzawa S."/>
            <person name="Miki H."/>
            <person name="Mignone F."/>
            <person name="Miyake S."/>
            <person name="Morris K."/>
            <person name="Mottagui-Tabar S."/>
            <person name="Mulder N."/>
            <person name="Nakano N."/>
            <person name="Nakauchi H."/>
            <person name="Ng P."/>
            <person name="Nilsson R."/>
            <person name="Nishiguchi S."/>
            <person name="Nishikawa S."/>
            <person name="Nori F."/>
            <person name="Ohara O."/>
            <person name="Okazaki Y."/>
            <person name="Orlando V."/>
            <person name="Pang K.C."/>
            <person name="Pavan W.J."/>
            <person name="Pavesi G."/>
            <person name="Pesole G."/>
            <person name="Petrovsky N."/>
            <person name="Piazza S."/>
            <person name="Reed J."/>
            <person name="Reid J.F."/>
            <person name="Ring B.Z."/>
            <person name="Ringwald M."/>
            <person name="Rost B."/>
            <person name="Ruan Y."/>
            <person name="Salzberg S.L."/>
            <person name="Sandelin A."/>
            <person name="Schneider C."/>
            <person name="Schoenbach C."/>
            <person name="Sekiguchi K."/>
            <person name="Semple C.A."/>
            <person name="Seno S."/>
            <person name="Sessa L."/>
            <person name="Sheng Y."/>
            <person name="Shibata Y."/>
            <person name="Shimada H."/>
            <person name="Shimada K."/>
            <person name="Silva D."/>
            <person name="Sinclair B."/>
            <person name="Sperling S."/>
            <person name="Stupka E."/>
            <person name="Sugiura K."/>
            <person name="Sultana R."/>
            <person name="Takenaka Y."/>
            <person name="Taki K."/>
            <person name="Tammoja K."/>
            <person name="Tan S.L."/>
            <person name="Tang S."/>
            <person name="Taylor M.S."/>
            <person name="Tegner J."/>
            <person name="Teichmann S.A."/>
            <person name="Ueda H.R."/>
            <person name="van Nimwegen E."/>
            <person name="Verardo R."/>
            <person name="Wei C.L."/>
            <person name="Yagi K."/>
            <person name="Yamanishi H."/>
            <person name="Zabarovsky E."/>
            <person name="Zhu S."/>
            <person name="Zimmer A."/>
            <person name="Hide W."/>
            <person name="Bult C."/>
            <person name="Grimmond S.M."/>
            <person name="Teasdale R.D."/>
            <person name="Liu E.T."/>
            <person name="Brusic V."/>
            <person name="Quackenbush J."/>
            <person name="Wahlestedt C."/>
            <person name="Mattick J.S."/>
            <person name="Hume D.A."/>
            <person name="Kai C."/>
            <person name="Sasaki D."/>
            <person name="Tomaru Y."/>
            <person name="Fukuda S."/>
            <person name="Kanamori-Katayama M."/>
            <person name="Suzuki M."/>
            <person name="Aoki J."/>
            <person name="Arakawa T."/>
            <person name="Iida J."/>
            <person name="Imamura K."/>
            <person name="Itoh M."/>
            <person name="Kato T."/>
            <person name="Kawaji H."/>
            <person name="Kawagashira N."/>
            <person name="Kawashima T."/>
            <person name="Kojima M."/>
            <person name="Kondo S."/>
            <person name="Konno H."/>
            <person name="Nakano K."/>
            <person name="Ninomiya N."/>
            <person name="Nishio T."/>
            <person name="Okada M."/>
            <person name="Plessy C."/>
            <person name="Shibata K."/>
            <person name="Shiraki T."/>
            <person name="Suzuki S."/>
            <person name="Tagami M."/>
            <person name="Waki K."/>
            <person name="Watahiki A."/>
            <person name="Okamura-Oho Y."/>
            <person name="Suzuki H."/>
            <person name="Kawai J."/>
            <person name="Hayashizaki Y."/>
        </authorList>
    </citation>
    <scope>NUCLEOTIDE SEQUENCE [LARGE SCALE MRNA]</scope>
    <source>
        <strain>C57BL/6J</strain>
        <tissue>Liver</tissue>
    </source>
</reference>
<reference key="2">
    <citation type="journal article" date="1990" name="Gene">
        <title>Deduced amino acid sequence of mouse blood-coagulation factor IX.</title>
        <authorList>
            <person name="Wu S.-M."/>
            <person name="Stafford D.W."/>
            <person name="Ware J."/>
        </authorList>
    </citation>
    <scope>NUCLEOTIDE SEQUENCE [MRNA] OF 13-471</scope>
    <scope>TISSUE SPECIFICITY</scope>
</reference>
<reference key="3">
    <citation type="journal article" date="1990" name="Genomics">
        <title>Direct sequencing of the activation peptide and the catalytic domain of the factor IX gene in six species.</title>
        <authorList>
            <person name="Sarkar G."/>
            <person name="Koeberl D.D."/>
            <person name="Sommer S.S."/>
        </authorList>
    </citation>
    <scope>NUCLEOTIDE SEQUENCE [MRNA] OF 180-463</scope>
</reference>
<gene>
    <name type="primary">F9</name>
    <name type="synonym">Cf9</name>
</gene>
<name>FA9_MOUSE</name>
<keyword id="KW-0094">Blood coagulation</keyword>
<keyword id="KW-0106">Calcium</keyword>
<keyword id="KW-0165">Cleavage on pair of basic residues</keyword>
<keyword id="KW-1015">Disulfide bond</keyword>
<keyword id="KW-0245">EGF-like domain</keyword>
<keyword id="KW-0301">Gamma-carboxyglutamic acid</keyword>
<keyword id="KW-0325">Glycoprotein</keyword>
<keyword id="KW-0356">Hemostasis</keyword>
<keyword id="KW-0378">Hydrolase</keyword>
<keyword id="KW-0379">Hydroxylation</keyword>
<keyword id="KW-0460">Magnesium</keyword>
<keyword id="KW-0479">Metal-binding</keyword>
<keyword id="KW-0597">Phosphoprotein</keyword>
<keyword id="KW-0645">Protease</keyword>
<keyword id="KW-1185">Reference proteome</keyword>
<keyword id="KW-0677">Repeat</keyword>
<keyword id="KW-0964">Secreted</keyword>
<keyword id="KW-0720">Serine protease</keyword>
<keyword id="KW-0732">Signal</keyword>
<keyword id="KW-0765">Sulfation</keyword>
<keyword id="KW-0865">Zymogen</keyword>
<feature type="signal peptide" evidence="4">
    <location>
        <begin position="1"/>
        <end position="28"/>
    </location>
</feature>
<feature type="propeptide" id="PRO_0000027760" evidence="2">
    <location>
        <begin position="29"/>
        <end position="46"/>
    </location>
</feature>
<feature type="chain" id="PRO_0000027761" description="Coagulation factor IX">
    <location>
        <begin position="47"/>
        <end position="471"/>
    </location>
</feature>
<feature type="chain" id="PRO_0000027762" description="Coagulation factor IXa light chain">
    <location>
        <begin position="47"/>
        <end position="192"/>
    </location>
</feature>
<feature type="propeptide" id="PRO_0000027763" description="Activation peptide" evidence="1">
    <location>
        <begin position="193"/>
        <end position="236"/>
    </location>
</feature>
<feature type="chain" id="PRO_0000027764" description="Coagulation factor IXa heavy chain">
    <location>
        <begin position="237"/>
        <end position="471"/>
    </location>
</feature>
<feature type="domain" description="Gla" evidence="7">
    <location>
        <begin position="47"/>
        <end position="92"/>
    </location>
</feature>
<feature type="domain" description="EGF-like 1; calcium-binding" evidence="5">
    <location>
        <begin position="93"/>
        <end position="129"/>
    </location>
</feature>
<feature type="domain" description="EGF-like 2" evidence="5">
    <location>
        <begin position="130"/>
        <end position="171"/>
    </location>
</feature>
<feature type="domain" description="Peptidase S1" evidence="6">
    <location>
        <begin position="237"/>
        <end position="469"/>
    </location>
</feature>
<feature type="active site" description="Charge relay system" evidence="2">
    <location>
        <position position="277"/>
    </location>
</feature>
<feature type="active site" description="Charge relay system" evidence="2">
    <location>
        <position position="325"/>
    </location>
</feature>
<feature type="active site" description="Charge relay system" evidence="2">
    <location>
        <position position="421"/>
    </location>
</feature>
<feature type="binding site" evidence="2">
    <location>
        <position position="47"/>
    </location>
    <ligand>
        <name>Ca(2+)</name>
        <dbReference type="ChEBI" id="CHEBI:29108"/>
        <label>1</label>
    </ligand>
</feature>
<feature type="binding site" evidence="2">
    <location>
        <position position="48"/>
    </location>
    <ligand>
        <name>Ca(2+)</name>
        <dbReference type="ChEBI" id="CHEBI:29108"/>
        <label>2</label>
    </ligand>
</feature>
<feature type="binding site" description="via 4-carboxyglutamate" evidence="2">
    <location>
        <position position="53"/>
    </location>
    <ligand>
        <name>Ca(2+)</name>
        <dbReference type="ChEBI" id="CHEBI:29108"/>
        <label>1</label>
    </ligand>
</feature>
<feature type="binding site" description="via 4-carboxyglutamate" evidence="2">
    <location>
        <position position="53"/>
    </location>
    <ligand>
        <name>Ca(2+)</name>
        <dbReference type="ChEBI" id="CHEBI:29108"/>
        <label>2</label>
    </ligand>
</feature>
<feature type="binding site" description="via 4-carboxyglutamate" evidence="2">
    <location>
        <position position="54"/>
    </location>
    <ligand>
        <name>Ca(2+)</name>
        <dbReference type="ChEBI" id="CHEBI:29108"/>
        <label>2</label>
    </ligand>
</feature>
<feature type="binding site" description="via 4-carboxyglutamate" evidence="2">
    <location>
        <position position="54"/>
    </location>
    <ligand>
        <name>Ca(2+)</name>
        <dbReference type="ChEBI" id="CHEBI:29108"/>
        <label>3</label>
    </ligand>
</feature>
<feature type="binding site" description="via 4-carboxyglutamate" evidence="2">
    <location>
        <position position="61"/>
    </location>
    <ligand>
        <name>Ca(2+)</name>
        <dbReference type="ChEBI" id="CHEBI:29108"/>
        <label>4</label>
    </ligand>
</feature>
<feature type="binding site" description="via 4-carboxyglutamate" evidence="2">
    <location>
        <position position="61"/>
    </location>
    <ligand>
        <name>Mg(2+)</name>
        <dbReference type="ChEBI" id="CHEBI:18420"/>
        <label>1</label>
    </ligand>
</feature>
<feature type="binding site" description="via 4-carboxyglutamate" evidence="2">
    <location>
        <position position="63"/>
    </location>
    <ligand>
        <name>Ca(2+)</name>
        <dbReference type="ChEBI" id="CHEBI:29108"/>
        <label>1</label>
    </ligand>
</feature>
<feature type="binding site" description="via 4-carboxyglutamate" evidence="2">
    <location>
        <position position="63"/>
    </location>
    <ligand>
        <name>Ca(2+)</name>
        <dbReference type="ChEBI" id="CHEBI:29108"/>
        <label>2</label>
    </ligand>
</feature>
<feature type="binding site" description="via 4-carboxyglutamate" evidence="2">
    <location>
        <position position="63"/>
    </location>
    <ligand>
        <name>Ca(2+)</name>
        <dbReference type="ChEBI" id="CHEBI:29108"/>
        <label>3</label>
    </ligand>
</feature>
<feature type="binding site" description="via 4-carboxyglutamate" evidence="2">
    <location>
        <position position="66"/>
    </location>
    <ligand>
        <name>Ca(2+)</name>
        <dbReference type="ChEBI" id="CHEBI:29108"/>
        <label>4</label>
    </ligand>
</feature>
<feature type="binding site" description="via 4-carboxyglutamate" evidence="2">
    <location>
        <position position="66"/>
    </location>
    <ligand>
        <name>Mg(2+)</name>
        <dbReference type="ChEBI" id="CHEBI:18420"/>
        <label>1</label>
    </ligand>
</feature>
<feature type="binding site" description="via 4-carboxyglutamate" evidence="2">
    <location>
        <position position="67"/>
    </location>
    <ligand>
        <name>Ca(2+)</name>
        <dbReference type="ChEBI" id="CHEBI:29108"/>
        <label>1</label>
    </ligand>
</feature>
<feature type="binding site" description="via 4-carboxyglutamate" evidence="2">
    <location>
        <position position="72"/>
    </location>
    <ligand>
        <name>Ca(2+)</name>
        <dbReference type="ChEBI" id="CHEBI:29108"/>
        <label>5</label>
    </ligand>
</feature>
<feature type="binding site" description="via 4-carboxyglutamate" evidence="2">
    <location>
        <position position="72"/>
    </location>
    <ligand>
        <name>Mg(2+)</name>
        <dbReference type="ChEBI" id="CHEBI:18420"/>
        <label>2</label>
    </ligand>
</feature>
<feature type="binding site" description="via 4-carboxyglutamate" evidence="2">
    <location>
        <position position="73"/>
    </location>
    <ligand>
        <name>Ca(2+)</name>
        <dbReference type="ChEBI" id="CHEBI:29108"/>
        <label>2</label>
    </ligand>
</feature>
<feature type="binding site" description="via 4-carboxyglutamate" evidence="2">
    <location>
        <position position="73"/>
    </location>
    <ligand>
        <name>Ca(2+)</name>
        <dbReference type="ChEBI" id="CHEBI:29108"/>
        <label>3</label>
    </ligand>
</feature>
<feature type="binding site" description="via 4-carboxyglutamate" evidence="2">
    <location>
        <position position="76"/>
    </location>
    <ligand>
        <name>Ca(2+)</name>
        <dbReference type="ChEBI" id="CHEBI:29108"/>
        <label>3</label>
    </ligand>
</feature>
<feature type="binding site" description="via 4-carboxyglutamate" evidence="2">
    <location>
        <position position="76"/>
    </location>
    <ligand>
        <name>Ca(2+)</name>
        <dbReference type="ChEBI" id="CHEBI:29108"/>
        <label>5</label>
    </ligand>
</feature>
<feature type="binding site" description="via 4-carboxyglutamate" evidence="2">
    <location>
        <position position="76"/>
    </location>
    <ligand>
        <name>Mg(2+)</name>
        <dbReference type="ChEBI" id="CHEBI:18420"/>
        <label>2</label>
    </ligand>
</feature>
<feature type="binding site" description="via 4-carboxyglutamate" evidence="2">
    <location>
        <position position="82"/>
    </location>
    <ligand>
        <name>Ca(2+)</name>
        <dbReference type="ChEBI" id="CHEBI:29108"/>
        <label>6</label>
    </ligand>
</feature>
<feature type="binding site" description="via 4-carboxyglutamate" evidence="2">
    <location>
        <position position="82"/>
    </location>
    <ligand>
        <name>Mg(2+)</name>
        <dbReference type="ChEBI" id="CHEBI:18420"/>
        <label>3</label>
    </ligand>
</feature>
<feature type="binding site" description="via 4-carboxyglutamate" evidence="2">
    <location>
        <position position="86"/>
    </location>
    <ligand>
        <name>Ca(2+)</name>
        <dbReference type="ChEBI" id="CHEBI:29108"/>
        <label>6</label>
    </ligand>
</feature>
<feature type="binding site" description="via 4-carboxyglutamate" evidence="2">
    <location>
        <position position="86"/>
    </location>
    <ligand>
        <name>Mg(2+)</name>
        <dbReference type="ChEBI" id="CHEBI:18420"/>
        <label>3</label>
    </ligand>
</feature>
<feature type="binding site" evidence="2">
    <location>
        <position position="93"/>
    </location>
    <ligand>
        <name>Ca(2+)</name>
        <dbReference type="ChEBI" id="CHEBI:29108"/>
        <label>7</label>
    </ligand>
</feature>
<feature type="binding site" evidence="2">
    <location>
        <position position="94"/>
    </location>
    <ligand>
        <name>Ca(2+)</name>
        <dbReference type="ChEBI" id="CHEBI:29108"/>
        <label>7</label>
    </ligand>
</feature>
<feature type="binding site" evidence="2">
    <location>
        <position position="96"/>
    </location>
    <ligand>
        <name>Ca(2+)</name>
        <dbReference type="ChEBI" id="CHEBI:29108"/>
        <label>7</label>
    </ligand>
</feature>
<feature type="binding site" evidence="2">
    <location>
        <position position="110"/>
    </location>
    <ligand>
        <name>Ca(2+)</name>
        <dbReference type="ChEBI" id="CHEBI:29108"/>
        <label>7</label>
    </ligand>
</feature>
<feature type="binding site" evidence="2">
    <location>
        <position position="111"/>
    </location>
    <ligand>
        <name>Ca(2+)</name>
        <dbReference type="ChEBI" id="CHEBI:29108"/>
        <label>7</label>
    </ligand>
</feature>
<feature type="binding site" evidence="2">
    <location>
        <position position="291"/>
    </location>
    <ligand>
        <name>Ca(2+)</name>
        <dbReference type="ChEBI" id="CHEBI:29108"/>
        <label>8</label>
    </ligand>
</feature>
<feature type="binding site" evidence="2">
    <location>
        <position position="293"/>
    </location>
    <ligand>
        <name>Ca(2+)</name>
        <dbReference type="ChEBI" id="CHEBI:29108"/>
        <label>8</label>
    </ligand>
</feature>
<feature type="binding site" evidence="2">
    <location>
        <position position="298"/>
    </location>
    <ligand>
        <name>Ca(2+)</name>
        <dbReference type="ChEBI" id="CHEBI:29108"/>
        <label>8</label>
    </ligand>
</feature>
<feature type="binding site" evidence="2">
    <location>
        <position position="301"/>
    </location>
    <ligand>
        <name>Ca(2+)</name>
        <dbReference type="ChEBI" id="CHEBI:29108"/>
        <label>8</label>
    </ligand>
</feature>
<feature type="site" description="Cleavage; by factor XIa" evidence="2">
    <location>
        <begin position="192"/>
        <end position="193"/>
    </location>
</feature>
<feature type="site" description="Cleavage; by factor XIa" evidence="2">
    <location>
        <begin position="236"/>
        <end position="237"/>
    </location>
</feature>
<feature type="modified residue" description="4-carboxyglutamate" evidence="3 7">
    <location>
        <position position="53"/>
    </location>
</feature>
<feature type="modified residue" description="4-carboxyglutamate" evidence="3 7">
    <location>
        <position position="54"/>
    </location>
</feature>
<feature type="modified residue" description="4-carboxyglutamate" evidence="3 7">
    <location>
        <position position="61"/>
    </location>
</feature>
<feature type="modified residue" description="4-carboxyglutamate" evidence="3 7">
    <location>
        <position position="63"/>
    </location>
</feature>
<feature type="modified residue" description="4-carboxyglutamate" evidence="3 7">
    <location>
        <position position="66"/>
    </location>
</feature>
<feature type="modified residue" description="4-carboxyglutamate" evidence="3 7">
    <location>
        <position position="67"/>
    </location>
</feature>
<feature type="modified residue" description="4-carboxyglutamate" evidence="3 7">
    <location>
        <position position="72"/>
    </location>
</feature>
<feature type="modified residue" description="4-carboxyglutamate" evidence="3 7">
    <location>
        <position position="73"/>
    </location>
</feature>
<feature type="modified residue" description="4-carboxyglutamate" evidence="3 7">
    <location>
        <position position="76"/>
    </location>
</feature>
<feature type="modified residue" description="4-carboxyglutamate" evidence="3 7">
    <location>
        <position position="79"/>
    </location>
</feature>
<feature type="modified residue" description="4-carboxyglutamate" evidence="3 7">
    <location>
        <position position="82"/>
    </location>
</feature>
<feature type="modified residue" description="4-carboxyglutamate" evidence="3 7">
    <location>
        <position position="86"/>
    </location>
</feature>
<feature type="modified residue" description="(3R)-3-hydroxyaspartate" evidence="2">
    <location>
        <position position="110"/>
    </location>
</feature>
<feature type="modified residue" description="Phosphoserine" evidence="2">
    <location>
        <position position="114"/>
    </location>
</feature>
<feature type="modified residue" description="Sulfotyrosine" evidence="2">
    <location>
        <position position="202"/>
    </location>
</feature>
<feature type="modified residue" description="Phosphoserine" evidence="2">
    <location>
        <position position="205"/>
    </location>
</feature>
<feature type="modified residue" description="Phosphothreonine; alternate" evidence="2">
    <location>
        <position position="206"/>
    </location>
</feature>
<feature type="glycosylation site" description="O-linked (GalNAc...) threonine" evidence="2">
    <location>
        <position position="85"/>
    </location>
</feature>
<feature type="glycosylation site" description="O-linked (Glc...) serine" evidence="2">
    <location>
        <position position="99"/>
    </location>
</feature>
<feature type="glycosylation site" description="N-linked (GlcNAc...) asparagine" evidence="4">
    <location>
        <position position="204"/>
    </location>
</feature>
<feature type="glycosylation site" description="O-linked (GalNAc...) threonine; alternate" evidence="2">
    <location>
        <position position="206"/>
    </location>
</feature>
<feature type="glycosylation site" description="N-linked (GlcNAc...) asparagine" evidence="4">
    <location>
        <position position="223"/>
    </location>
</feature>
<feature type="glycosylation site" description="O-linked (GalNAc...) threonine" evidence="2">
    <location>
        <position position="225"/>
    </location>
</feature>
<feature type="glycosylation site" description="O-linked (GalNAc...) threonine" evidence="2">
    <location>
        <position position="235"/>
    </location>
</feature>
<feature type="disulfide bond" evidence="2">
    <location>
        <begin position="64"/>
        <end position="69"/>
    </location>
</feature>
<feature type="disulfide bond" evidence="2">
    <location>
        <begin position="97"/>
        <end position="108"/>
    </location>
</feature>
<feature type="disulfide bond" evidence="2">
    <location>
        <begin position="102"/>
        <end position="117"/>
    </location>
</feature>
<feature type="disulfide bond" evidence="2">
    <location>
        <begin position="119"/>
        <end position="128"/>
    </location>
</feature>
<feature type="disulfide bond" evidence="2">
    <location>
        <begin position="134"/>
        <end position="145"/>
    </location>
</feature>
<feature type="disulfide bond" evidence="2">
    <location>
        <begin position="141"/>
        <end position="155"/>
    </location>
</feature>
<feature type="disulfide bond" evidence="2">
    <location>
        <begin position="157"/>
        <end position="170"/>
    </location>
</feature>
<feature type="disulfide bond" description="Interchain (between light and heavy chains)" evidence="2">
    <location>
        <begin position="178"/>
        <end position="345"/>
    </location>
</feature>
<feature type="disulfide bond" evidence="2">
    <location>
        <begin position="262"/>
        <end position="278"/>
    </location>
</feature>
<feature type="disulfide bond" evidence="2">
    <location>
        <begin position="392"/>
        <end position="406"/>
    </location>
</feature>
<feature type="disulfide bond" evidence="2">
    <location>
        <begin position="417"/>
        <end position="445"/>
    </location>
</feature>
<feature type="sequence conflict" description="In Ref. 2; AAA37629." evidence="9" ref="2">
    <original>Q</original>
    <variation>H</variation>
    <location>
        <position position="375"/>
    </location>
</feature>
<feature type="sequence conflict" description="In Ref. 2; AAA37629." evidence="9" ref="2">
    <original>I</original>
    <variation>T</variation>
    <location>
        <position position="400"/>
    </location>
</feature>
<dbReference type="EC" id="3.4.21.22" evidence="2"/>
<dbReference type="EMBL" id="AK149372">
    <property type="protein sequence ID" value="BAE28840.1"/>
    <property type="molecule type" value="mRNA"/>
</dbReference>
<dbReference type="EMBL" id="M23109">
    <property type="protein sequence ID" value="AAA37629.1"/>
    <property type="molecule type" value="mRNA"/>
</dbReference>
<dbReference type="EMBL" id="M26236">
    <property type="protein sequence ID" value="AAA37630.1"/>
    <property type="molecule type" value="mRNA"/>
</dbReference>
<dbReference type="CCDS" id="CCDS30158.1"/>
<dbReference type="PIR" id="JQ0419">
    <property type="entry name" value="JQ0419"/>
</dbReference>
<dbReference type="RefSeq" id="NP_001292726.1">
    <property type="nucleotide sequence ID" value="NM_001305797.1"/>
</dbReference>
<dbReference type="RefSeq" id="NP_032005.1">
    <property type="nucleotide sequence ID" value="NM_007979.2"/>
</dbReference>
<dbReference type="SMR" id="P16294"/>
<dbReference type="ComplexPortal" id="CPX-5101">
    <property type="entry name" value="Coagulation factor IXa complex"/>
</dbReference>
<dbReference type="FunCoup" id="P16294">
    <property type="interactions" value="55"/>
</dbReference>
<dbReference type="STRING" id="10090.ENSMUSP00000033477"/>
<dbReference type="MEROPS" id="S01.214"/>
<dbReference type="GlyCosmos" id="P16294">
    <property type="glycosylation" value="7 sites, No reported glycans"/>
</dbReference>
<dbReference type="GlyGen" id="P16294">
    <property type="glycosylation" value="9 sites, 2 N-linked glycans (2 sites)"/>
</dbReference>
<dbReference type="iPTMnet" id="P16294"/>
<dbReference type="PhosphoSitePlus" id="P16294"/>
<dbReference type="CPTAC" id="non-CPTAC-3415"/>
<dbReference type="CPTAC" id="non-CPTAC-3576"/>
<dbReference type="CPTAC" id="non-CPTAC-5605"/>
<dbReference type="jPOST" id="P16294"/>
<dbReference type="PaxDb" id="10090-ENSMUSP00000033477"/>
<dbReference type="ProteomicsDB" id="277033"/>
<dbReference type="TopDownProteomics" id="P16294"/>
<dbReference type="Antibodypedia" id="367">
    <property type="antibodies" value="918 antibodies from 42 providers"/>
</dbReference>
<dbReference type="DNASU" id="14071"/>
<dbReference type="Ensembl" id="ENSMUST00000033477.5">
    <property type="protein sequence ID" value="ENSMUSP00000033477.5"/>
    <property type="gene ID" value="ENSMUSG00000031138.5"/>
</dbReference>
<dbReference type="GeneID" id="14071"/>
<dbReference type="KEGG" id="mmu:14071"/>
<dbReference type="UCSC" id="uc009thw.2">
    <property type="organism name" value="mouse"/>
</dbReference>
<dbReference type="AGR" id="MGI:88384"/>
<dbReference type="CTD" id="2158"/>
<dbReference type="MGI" id="MGI:88384">
    <property type="gene designation" value="F9"/>
</dbReference>
<dbReference type="VEuPathDB" id="HostDB:ENSMUSG00000031138"/>
<dbReference type="eggNOG" id="ENOG502QUEV">
    <property type="taxonomic scope" value="Eukaryota"/>
</dbReference>
<dbReference type="GeneTree" id="ENSGT00940000159516"/>
<dbReference type="HOGENOM" id="CLU_006842_19_5_1"/>
<dbReference type="InParanoid" id="P16294"/>
<dbReference type="OMA" id="SYECWCR"/>
<dbReference type="OrthoDB" id="8909918at2759"/>
<dbReference type="PhylomeDB" id="P16294"/>
<dbReference type="TreeFam" id="TF327329"/>
<dbReference type="Reactome" id="R-MMU-140834">
    <property type="pathway name" value="Extrinsic Pathway of Fibrin Clot Formation"/>
</dbReference>
<dbReference type="Reactome" id="R-MMU-140837">
    <property type="pathway name" value="Intrinsic Pathway of Fibrin Clot Formation"/>
</dbReference>
<dbReference type="Reactome" id="R-MMU-159740">
    <property type="pathway name" value="Gamma-carboxylation of protein precursors"/>
</dbReference>
<dbReference type="Reactome" id="R-MMU-159763">
    <property type="pathway name" value="Transport of gamma-carboxylated protein precursors from the endoplasmic reticulum to the Golgi apparatus"/>
</dbReference>
<dbReference type="Reactome" id="R-MMU-159782">
    <property type="pathway name" value="Removal of aminoterminal propeptides from gamma-carboxylated proteins"/>
</dbReference>
<dbReference type="BioGRID-ORCS" id="14071">
    <property type="hits" value="1 hit in 62 CRISPR screens"/>
</dbReference>
<dbReference type="ChiTaRS" id="F9">
    <property type="organism name" value="mouse"/>
</dbReference>
<dbReference type="PRO" id="PR:P16294"/>
<dbReference type="Proteomes" id="UP000000589">
    <property type="component" value="Chromosome X"/>
</dbReference>
<dbReference type="RNAct" id="P16294">
    <property type="molecule type" value="protein"/>
</dbReference>
<dbReference type="Bgee" id="ENSMUSG00000031138">
    <property type="expression patterns" value="Expressed in left lobe of liver and 30 other cell types or tissues"/>
</dbReference>
<dbReference type="GO" id="GO:0005615">
    <property type="term" value="C:extracellular space"/>
    <property type="evidence" value="ECO:0000250"/>
    <property type="project" value="UniProtKB"/>
</dbReference>
<dbReference type="GO" id="GO:0005509">
    <property type="term" value="F:calcium ion binding"/>
    <property type="evidence" value="ECO:0000250"/>
    <property type="project" value="UniProtKB"/>
</dbReference>
<dbReference type="GO" id="GO:0004175">
    <property type="term" value="F:endopeptidase activity"/>
    <property type="evidence" value="ECO:0000250"/>
    <property type="project" value="UniProtKB"/>
</dbReference>
<dbReference type="GO" id="GO:0008233">
    <property type="term" value="F:peptidase activity"/>
    <property type="evidence" value="ECO:0000314"/>
    <property type="project" value="MGI"/>
</dbReference>
<dbReference type="GO" id="GO:0004252">
    <property type="term" value="F:serine-type endopeptidase activity"/>
    <property type="evidence" value="ECO:0007669"/>
    <property type="project" value="UniProtKB-EC"/>
</dbReference>
<dbReference type="GO" id="GO:0007596">
    <property type="term" value="P:blood coagulation"/>
    <property type="evidence" value="ECO:0000315"/>
    <property type="project" value="MGI"/>
</dbReference>
<dbReference type="GO" id="GO:0031638">
    <property type="term" value="P:zymogen activation"/>
    <property type="evidence" value="ECO:0000250"/>
    <property type="project" value="UniProtKB"/>
</dbReference>
<dbReference type="CDD" id="cd00054">
    <property type="entry name" value="EGF_CA"/>
    <property type="match status" value="1"/>
</dbReference>
<dbReference type="CDD" id="cd00190">
    <property type="entry name" value="Tryp_SPc"/>
    <property type="match status" value="1"/>
</dbReference>
<dbReference type="FunFam" id="2.10.25.10:FF:000259">
    <property type="entry name" value="Coagulation factor VII"/>
    <property type="match status" value="1"/>
</dbReference>
<dbReference type="FunFam" id="2.40.10.10:FF:000013">
    <property type="entry name" value="Coagulation factor X"/>
    <property type="match status" value="1"/>
</dbReference>
<dbReference type="FunFam" id="2.10.25.10:FF:000162">
    <property type="entry name" value="Coagulation factor X (Predicted)"/>
    <property type="match status" value="1"/>
</dbReference>
<dbReference type="FunFam" id="4.10.740.10:FF:000001">
    <property type="entry name" value="vitamin K-dependent protein S"/>
    <property type="match status" value="1"/>
</dbReference>
<dbReference type="Gene3D" id="4.10.740.10">
    <property type="entry name" value="Coagulation Factor IX"/>
    <property type="match status" value="1"/>
</dbReference>
<dbReference type="Gene3D" id="2.10.25.10">
    <property type="entry name" value="Laminin"/>
    <property type="match status" value="2"/>
</dbReference>
<dbReference type="Gene3D" id="2.40.10.10">
    <property type="entry name" value="Trypsin-like serine proteases"/>
    <property type="match status" value="2"/>
</dbReference>
<dbReference type="InterPro" id="IPR017857">
    <property type="entry name" value="Coagulation_fac-like_Gla_dom"/>
</dbReference>
<dbReference type="InterPro" id="IPR001881">
    <property type="entry name" value="EGF-like_Ca-bd_dom"/>
</dbReference>
<dbReference type="InterPro" id="IPR000742">
    <property type="entry name" value="EGF-like_dom"/>
</dbReference>
<dbReference type="InterPro" id="IPR000152">
    <property type="entry name" value="EGF-type_Asp/Asn_hydroxyl_site"/>
</dbReference>
<dbReference type="InterPro" id="IPR018097">
    <property type="entry name" value="EGF_Ca-bd_CS"/>
</dbReference>
<dbReference type="InterPro" id="IPR035972">
    <property type="entry name" value="GLA-like_dom_SF"/>
</dbReference>
<dbReference type="InterPro" id="IPR000294">
    <property type="entry name" value="GLA_domain"/>
</dbReference>
<dbReference type="InterPro" id="IPR012224">
    <property type="entry name" value="Pept_S1A_FX"/>
</dbReference>
<dbReference type="InterPro" id="IPR050442">
    <property type="entry name" value="Peptidase_S1_coag_factors"/>
</dbReference>
<dbReference type="InterPro" id="IPR009003">
    <property type="entry name" value="Peptidase_S1_PA"/>
</dbReference>
<dbReference type="InterPro" id="IPR043504">
    <property type="entry name" value="Peptidase_S1_PA_chymotrypsin"/>
</dbReference>
<dbReference type="InterPro" id="IPR001314">
    <property type="entry name" value="Peptidase_S1A"/>
</dbReference>
<dbReference type="InterPro" id="IPR001254">
    <property type="entry name" value="Trypsin_dom"/>
</dbReference>
<dbReference type="InterPro" id="IPR018114">
    <property type="entry name" value="TRYPSIN_HIS"/>
</dbReference>
<dbReference type="InterPro" id="IPR033116">
    <property type="entry name" value="TRYPSIN_SER"/>
</dbReference>
<dbReference type="PANTHER" id="PTHR24278">
    <property type="entry name" value="COAGULATION FACTOR"/>
    <property type="match status" value="1"/>
</dbReference>
<dbReference type="PANTHER" id="PTHR24278:SF31">
    <property type="entry name" value="COAGULATION FACTOR IX"/>
    <property type="match status" value="1"/>
</dbReference>
<dbReference type="Pfam" id="PF00008">
    <property type="entry name" value="EGF"/>
    <property type="match status" value="1"/>
</dbReference>
<dbReference type="Pfam" id="PF14670">
    <property type="entry name" value="FXa_inhibition"/>
    <property type="match status" value="1"/>
</dbReference>
<dbReference type="Pfam" id="PF00594">
    <property type="entry name" value="Gla"/>
    <property type="match status" value="1"/>
</dbReference>
<dbReference type="Pfam" id="PF00089">
    <property type="entry name" value="Trypsin"/>
    <property type="match status" value="1"/>
</dbReference>
<dbReference type="PIRSF" id="PIRSF001143">
    <property type="entry name" value="Factor_X"/>
    <property type="match status" value="1"/>
</dbReference>
<dbReference type="PRINTS" id="PR00722">
    <property type="entry name" value="CHYMOTRYPSIN"/>
</dbReference>
<dbReference type="PRINTS" id="PR00010">
    <property type="entry name" value="EGFBLOOD"/>
</dbReference>
<dbReference type="PRINTS" id="PR00001">
    <property type="entry name" value="GLABLOOD"/>
</dbReference>
<dbReference type="SMART" id="SM00181">
    <property type="entry name" value="EGF"/>
    <property type="match status" value="2"/>
</dbReference>
<dbReference type="SMART" id="SM00179">
    <property type="entry name" value="EGF_CA"/>
    <property type="match status" value="1"/>
</dbReference>
<dbReference type="SMART" id="SM00069">
    <property type="entry name" value="GLA"/>
    <property type="match status" value="1"/>
</dbReference>
<dbReference type="SMART" id="SM00020">
    <property type="entry name" value="Tryp_SPc"/>
    <property type="match status" value="1"/>
</dbReference>
<dbReference type="SUPFAM" id="SSF57196">
    <property type="entry name" value="EGF/Laminin"/>
    <property type="match status" value="1"/>
</dbReference>
<dbReference type="SUPFAM" id="SSF57630">
    <property type="entry name" value="GLA-domain"/>
    <property type="match status" value="1"/>
</dbReference>
<dbReference type="SUPFAM" id="SSF50494">
    <property type="entry name" value="Trypsin-like serine proteases"/>
    <property type="match status" value="1"/>
</dbReference>
<dbReference type="PROSITE" id="PS00010">
    <property type="entry name" value="ASX_HYDROXYL"/>
    <property type="match status" value="1"/>
</dbReference>
<dbReference type="PROSITE" id="PS00022">
    <property type="entry name" value="EGF_1"/>
    <property type="match status" value="1"/>
</dbReference>
<dbReference type="PROSITE" id="PS01186">
    <property type="entry name" value="EGF_2"/>
    <property type="match status" value="2"/>
</dbReference>
<dbReference type="PROSITE" id="PS50026">
    <property type="entry name" value="EGF_3"/>
    <property type="match status" value="1"/>
</dbReference>
<dbReference type="PROSITE" id="PS01187">
    <property type="entry name" value="EGF_CA"/>
    <property type="match status" value="1"/>
</dbReference>
<dbReference type="PROSITE" id="PS00011">
    <property type="entry name" value="GLA_1"/>
    <property type="match status" value="1"/>
</dbReference>
<dbReference type="PROSITE" id="PS50998">
    <property type="entry name" value="GLA_2"/>
    <property type="match status" value="1"/>
</dbReference>
<dbReference type="PROSITE" id="PS50240">
    <property type="entry name" value="TRYPSIN_DOM"/>
    <property type="match status" value="1"/>
</dbReference>
<dbReference type="PROSITE" id="PS00134">
    <property type="entry name" value="TRYPSIN_HIS"/>
    <property type="match status" value="1"/>
</dbReference>
<dbReference type="PROSITE" id="PS00135">
    <property type="entry name" value="TRYPSIN_SER"/>
    <property type="match status" value="1"/>
</dbReference>
<protein>
    <recommendedName>
        <fullName>Coagulation factor IX</fullName>
        <ecNumber evidence="2">3.4.21.22</ecNumber>
    </recommendedName>
    <alternativeName>
        <fullName>Christmas factor</fullName>
    </alternativeName>
    <component>
        <recommendedName>
            <fullName>Coagulation factor IXa light chain</fullName>
        </recommendedName>
    </component>
    <component>
        <recommendedName>
            <fullName>Coagulation factor IXa heavy chain</fullName>
        </recommendedName>
    </component>
</protein>
<sequence>MKHLNTVMAESPALITIFLLGYLLSTECAVFLDRENATKILTRPKRYNSGKLEEFVRGNLERECIEERCSFEEAREVFENTEKTTEFWKQYVDGDQCESNPCLNGGICKDDISSYECWCQVGFEGRNCELDATCNIKNGRCKQFCKNSPDNKVICSCTEGYQLAEDQKSCEPTVPFPCGRASISYSSKKITRAETVFSNMDYENSTEAVFIQDDITDGAILNNVTESSESLNDFTRVVGGENAKPGQIPWQVILNGEIEAFCGGAIINEKWIVTAAHCLKPGDKIEVVAGEYNIDKKEDTEQRRNVIRTIPHHQYNATINKYSHDIALLELDKPLILNSYVTPICVANREYTNIFLKFGSGYVSGWGKVFNKGRQASILQYLRVPLVDRATCLRSTTFTIYNNMFCAGYREGGKDSCEGDSGGPHVTEVEGTSFLTGIISWGEECAMKGKYGIYTKVSRYVNWIKEKTKLT</sequence>
<comment type="function">
    <text evidence="2">Factor IX is a vitamin K-dependent plasma protein that participates in the intrinsic pathway of blood coagulation by converting factor X to its active form in the presence of Ca(2+) ions, phospholipids, and factor VIIIa.</text>
</comment>
<comment type="catalytic activity">
    <reaction evidence="2">
        <text>Selective cleavage of Arg-|-Ile bond in factor X to form factor Xa.</text>
        <dbReference type="EC" id="3.4.21.22"/>
    </reaction>
</comment>
<comment type="subunit">
    <text evidence="2">Heterodimer of a light chain and a heavy chain; disulfide-linked. Interacts (inactive and activated) with F11 (activated) in calcium-dependent manner. Interacts with SERPINC1.</text>
</comment>
<comment type="subcellular location">
    <subcellularLocation>
        <location evidence="2">Secreted</location>
    </subcellularLocation>
</comment>
<comment type="tissue specificity">
    <text evidence="8">Detected in liver.</text>
</comment>
<comment type="domain">
    <text evidence="3">Calcium binds to the gamma-carboxyglutamic acid (Gla) residues in the Gla domain. Calcium can also bind, with stronger affinity, to another site beyond the Gla domain. Under physiological ion concentrations, Ca(2+) is displaced by Mg(2+) from some of the gammaglutamate residues in the N-terminal Gla domain. This leads to a subtle conformation change that may affect the interaction with its binding protein.</text>
</comment>
<comment type="PTM">
    <text evidence="2">Activated by factor XIa, which excises the activation peptide. The propeptide can also be removed by snake venom protease (By similarity). Activated by coagulation factor VIIa-tissue factor (F7-F3) complex in calcium-dependent manner (By similarity).</text>
</comment>
<comment type="PTM">
    <text evidence="2">The iron and 2-oxoglutarate dependent 3-hydroxylation of aspartate and asparagine is (R) stereospecific within EGF domains.</text>
</comment>
<comment type="PTM">
    <text evidence="2">Predominantly O-glucosylated at Ser-99 by POGLUT1 in vitro.</text>
</comment>
<comment type="similarity">
    <text evidence="6">Belongs to the peptidase S1 family.</text>
</comment>
<organism>
    <name type="scientific">Mus musculus</name>
    <name type="common">Mouse</name>
    <dbReference type="NCBI Taxonomy" id="10090"/>
    <lineage>
        <taxon>Eukaryota</taxon>
        <taxon>Metazoa</taxon>
        <taxon>Chordata</taxon>
        <taxon>Craniata</taxon>
        <taxon>Vertebrata</taxon>
        <taxon>Euteleostomi</taxon>
        <taxon>Mammalia</taxon>
        <taxon>Eutheria</taxon>
        <taxon>Euarchontoglires</taxon>
        <taxon>Glires</taxon>
        <taxon>Rodentia</taxon>
        <taxon>Myomorpha</taxon>
        <taxon>Muroidea</taxon>
        <taxon>Muridae</taxon>
        <taxon>Murinae</taxon>
        <taxon>Mus</taxon>
        <taxon>Mus</taxon>
    </lineage>
</organism>
<accession>P16294</accession>
<accession>Q3UES1</accession>
<proteinExistence type="evidence at transcript level"/>
<evidence type="ECO:0000250" key="1"/>
<evidence type="ECO:0000250" key="2">
    <source>
        <dbReference type="UniProtKB" id="P00740"/>
    </source>
</evidence>
<evidence type="ECO:0000250" key="3">
    <source>
        <dbReference type="UniProtKB" id="P00741"/>
    </source>
</evidence>
<evidence type="ECO:0000255" key="4"/>
<evidence type="ECO:0000255" key="5">
    <source>
        <dbReference type="PROSITE-ProRule" id="PRU00076"/>
    </source>
</evidence>
<evidence type="ECO:0000255" key="6">
    <source>
        <dbReference type="PROSITE-ProRule" id="PRU00274"/>
    </source>
</evidence>
<evidence type="ECO:0000255" key="7">
    <source>
        <dbReference type="PROSITE-ProRule" id="PRU00463"/>
    </source>
</evidence>
<evidence type="ECO:0000269" key="8">
    <source>
    </source>
</evidence>
<evidence type="ECO:0000305" key="9"/>